<feature type="chain" id="PRO_0000161441" description="tRNA uridine(34) hydroxylase">
    <location>
        <begin position="1"/>
        <end position="319"/>
    </location>
</feature>
<feature type="domain" description="Rhodanese" evidence="1">
    <location>
        <begin position="127"/>
        <end position="221"/>
    </location>
</feature>
<feature type="active site" description="Cysteine persulfide intermediate" evidence="1">
    <location>
        <position position="181"/>
    </location>
</feature>
<sequence length="319" mass="36760">MATTKPYRVLLYYMYTTIENPEEFAAEHLEFCNSLELKGRILVAKEGINGTCSGTVEQTEKYMEAMNNDPRFDGIVFKIDEADGHAFKKMHVRPRPELVTLRLEDDINPHEITGKYLEPKDFYEAMKQEDTVIIDARNDYEFDLGHFKGAIKPDIESFRELPDWIRENKEVLEGKKILTYCTGGIRCEKFSGWLVREGYEDVSQLHGGIVTYGKDPEVQGELWDGQCYVFDERIAVPVNQKEHVIVGKDHFTGEPCERYVNCANPECNKKILCSEENEAKYLRACSHECRVSPRNRYVIQHELTEEQVAAALEQIEAGK</sequence>
<evidence type="ECO:0000255" key="1">
    <source>
        <dbReference type="HAMAP-Rule" id="MF_00469"/>
    </source>
</evidence>
<organism>
    <name type="scientific">Bacillus thuringiensis subsp. konkukian (strain 97-27)</name>
    <dbReference type="NCBI Taxonomy" id="281309"/>
    <lineage>
        <taxon>Bacteria</taxon>
        <taxon>Bacillati</taxon>
        <taxon>Bacillota</taxon>
        <taxon>Bacilli</taxon>
        <taxon>Bacillales</taxon>
        <taxon>Bacillaceae</taxon>
        <taxon>Bacillus</taxon>
        <taxon>Bacillus cereus group</taxon>
    </lineage>
</organism>
<protein>
    <recommendedName>
        <fullName evidence="1">tRNA uridine(34) hydroxylase</fullName>
        <ecNumber evidence="1">1.14.-.-</ecNumber>
    </recommendedName>
    <alternativeName>
        <fullName evidence="1">tRNA hydroxylation protein O</fullName>
    </alternativeName>
</protein>
<accession>Q6HK75</accession>
<gene>
    <name evidence="1" type="primary">trhO</name>
    <name type="ordered locus">BT9727_1719</name>
</gene>
<dbReference type="EC" id="1.14.-.-" evidence="1"/>
<dbReference type="EMBL" id="AE017355">
    <property type="protein sequence ID" value="AAT59618.1"/>
    <property type="molecule type" value="Genomic_DNA"/>
</dbReference>
<dbReference type="RefSeq" id="WP_000246230.1">
    <property type="nucleotide sequence ID" value="NC_005957.1"/>
</dbReference>
<dbReference type="RefSeq" id="YP_036051.1">
    <property type="nucleotide sequence ID" value="NC_005957.1"/>
</dbReference>
<dbReference type="SMR" id="Q6HK75"/>
<dbReference type="KEGG" id="btk:BT9727_1719"/>
<dbReference type="PATRIC" id="fig|281309.8.peg.1812"/>
<dbReference type="HOGENOM" id="CLU_038878_1_0_9"/>
<dbReference type="Proteomes" id="UP000001301">
    <property type="component" value="Chromosome"/>
</dbReference>
<dbReference type="GO" id="GO:0016705">
    <property type="term" value="F:oxidoreductase activity, acting on paired donors, with incorporation or reduction of molecular oxygen"/>
    <property type="evidence" value="ECO:0007669"/>
    <property type="project" value="UniProtKB-UniRule"/>
</dbReference>
<dbReference type="GO" id="GO:0006400">
    <property type="term" value="P:tRNA modification"/>
    <property type="evidence" value="ECO:0007669"/>
    <property type="project" value="UniProtKB-UniRule"/>
</dbReference>
<dbReference type="CDD" id="cd01518">
    <property type="entry name" value="RHOD_YceA"/>
    <property type="match status" value="1"/>
</dbReference>
<dbReference type="Gene3D" id="3.30.70.100">
    <property type="match status" value="1"/>
</dbReference>
<dbReference type="Gene3D" id="3.40.250.10">
    <property type="entry name" value="Rhodanese-like domain"/>
    <property type="match status" value="1"/>
</dbReference>
<dbReference type="HAMAP" id="MF_00469">
    <property type="entry name" value="TrhO"/>
    <property type="match status" value="1"/>
</dbReference>
<dbReference type="InterPro" id="IPR001763">
    <property type="entry name" value="Rhodanese-like_dom"/>
</dbReference>
<dbReference type="InterPro" id="IPR036873">
    <property type="entry name" value="Rhodanese-like_dom_sf"/>
</dbReference>
<dbReference type="InterPro" id="IPR022111">
    <property type="entry name" value="Rhodanese_C"/>
</dbReference>
<dbReference type="InterPro" id="IPR020936">
    <property type="entry name" value="TrhO"/>
</dbReference>
<dbReference type="InterPro" id="IPR040503">
    <property type="entry name" value="TRHO_N"/>
</dbReference>
<dbReference type="NCBIfam" id="NF001135">
    <property type="entry name" value="PRK00142.1-3"/>
    <property type="match status" value="1"/>
</dbReference>
<dbReference type="PANTHER" id="PTHR43268:SF3">
    <property type="entry name" value="RHODANESE-LIKE DOMAIN-CONTAINING PROTEIN 7-RELATED"/>
    <property type="match status" value="1"/>
</dbReference>
<dbReference type="PANTHER" id="PTHR43268">
    <property type="entry name" value="THIOSULFATE SULFURTRANSFERASE/RHODANESE-LIKE DOMAIN-CONTAINING PROTEIN 2"/>
    <property type="match status" value="1"/>
</dbReference>
<dbReference type="Pfam" id="PF00581">
    <property type="entry name" value="Rhodanese"/>
    <property type="match status" value="1"/>
</dbReference>
<dbReference type="Pfam" id="PF12368">
    <property type="entry name" value="Rhodanese_C"/>
    <property type="match status" value="1"/>
</dbReference>
<dbReference type="Pfam" id="PF17773">
    <property type="entry name" value="UPF0176_N"/>
    <property type="match status" value="1"/>
</dbReference>
<dbReference type="SMART" id="SM00450">
    <property type="entry name" value="RHOD"/>
    <property type="match status" value="1"/>
</dbReference>
<dbReference type="SUPFAM" id="SSF52821">
    <property type="entry name" value="Rhodanese/Cell cycle control phosphatase"/>
    <property type="match status" value="1"/>
</dbReference>
<dbReference type="PROSITE" id="PS50206">
    <property type="entry name" value="RHODANESE_3"/>
    <property type="match status" value="1"/>
</dbReference>
<keyword id="KW-0560">Oxidoreductase</keyword>
<keyword id="KW-0819">tRNA processing</keyword>
<name>TRHO_BACHK</name>
<comment type="function">
    <text evidence="1">Catalyzes oxygen-dependent 5-hydroxyuridine (ho5U) modification at position 34 in tRNAs.</text>
</comment>
<comment type="catalytic activity">
    <reaction evidence="1">
        <text>uridine(34) in tRNA + AH2 + O2 = 5-hydroxyuridine(34) in tRNA + A + H2O</text>
        <dbReference type="Rhea" id="RHEA:64224"/>
        <dbReference type="Rhea" id="RHEA-COMP:11727"/>
        <dbReference type="Rhea" id="RHEA-COMP:13381"/>
        <dbReference type="ChEBI" id="CHEBI:13193"/>
        <dbReference type="ChEBI" id="CHEBI:15377"/>
        <dbReference type="ChEBI" id="CHEBI:15379"/>
        <dbReference type="ChEBI" id="CHEBI:17499"/>
        <dbReference type="ChEBI" id="CHEBI:65315"/>
        <dbReference type="ChEBI" id="CHEBI:136877"/>
    </reaction>
</comment>
<comment type="similarity">
    <text evidence="1">Belongs to the TrhO family.</text>
</comment>
<proteinExistence type="inferred from homology"/>
<reference key="1">
    <citation type="journal article" date="2006" name="J. Bacteriol.">
        <title>Pathogenomic sequence analysis of Bacillus cereus and Bacillus thuringiensis isolates closely related to Bacillus anthracis.</title>
        <authorList>
            <person name="Han C.S."/>
            <person name="Xie G."/>
            <person name="Challacombe J.F."/>
            <person name="Altherr M.R."/>
            <person name="Bhotika S.S."/>
            <person name="Bruce D."/>
            <person name="Campbell C.S."/>
            <person name="Campbell M.L."/>
            <person name="Chen J."/>
            <person name="Chertkov O."/>
            <person name="Cleland C."/>
            <person name="Dimitrijevic M."/>
            <person name="Doggett N.A."/>
            <person name="Fawcett J.J."/>
            <person name="Glavina T."/>
            <person name="Goodwin L.A."/>
            <person name="Hill K.K."/>
            <person name="Hitchcock P."/>
            <person name="Jackson P.J."/>
            <person name="Keim P."/>
            <person name="Kewalramani A.R."/>
            <person name="Longmire J."/>
            <person name="Lucas S."/>
            <person name="Malfatti S."/>
            <person name="McMurry K."/>
            <person name="Meincke L.J."/>
            <person name="Misra M."/>
            <person name="Moseman B.L."/>
            <person name="Mundt M."/>
            <person name="Munk A.C."/>
            <person name="Okinaka R.T."/>
            <person name="Parson-Quintana B."/>
            <person name="Reilly L.P."/>
            <person name="Richardson P."/>
            <person name="Robinson D.L."/>
            <person name="Rubin E."/>
            <person name="Saunders E."/>
            <person name="Tapia R."/>
            <person name="Tesmer J.G."/>
            <person name="Thayer N."/>
            <person name="Thompson L.S."/>
            <person name="Tice H."/>
            <person name="Ticknor L.O."/>
            <person name="Wills P.L."/>
            <person name="Brettin T.S."/>
            <person name="Gilna P."/>
        </authorList>
    </citation>
    <scope>NUCLEOTIDE SEQUENCE [LARGE SCALE GENOMIC DNA]</scope>
    <source>
        <strain>97-27</strain>
    </source>
</reference>